<organism>
    <name type="scientific">Paraburkholderia phymatum (strain DSM 17167 / CIP 108236 / LMG 21445 / STM815)</name>
    <name type="common">Burkholderia phymatum</name>
    <dbReference type="NCBI Taxonomy" id="391038"/>
    <lineage>
        <taxon>Bacteria</taxon>
        <taxon>Pseudomonadati</taxon>
        <taxon>Pseudomonadota</taxon>
        <taxon>Betaproteobacteria</taxon>
        <taxon>Burkholderiales</taxon>
        <taxon>Burkholderiaceae</taxon>
        <taxon>Paraburkholderia</taxon>
    </lineage>
</organism>
<comment type="function">
    <text evidence="1">Catalyzes the formation of phosphatidylethanolamine (PtdEtn) from phosphatidylserine (PtdSer).</text>
</comment>
<comment type="catalytic activity">
    <reaction evidence="1">
        <text>a 1,2-diacyl-sn-glycero-3-phospho-L-serine + H(+) = a 1,2-diacyl-sn-glycero-3-phosphoethanolamine + CO2</text>
        <dbReference type="Rhea" id="RHEA:20828"/>
        <dbReference type="ChEBI" id="CHEBI:15378"/>
        <dbReference type="ChEBI" id="CHEBI:16526"/>
        <dbReference type="ChEBI" id="CHEBI:57262"/>
        <dbReference type="ChEBI" id="CHEBI:64612"/>
        <dbReference type="EC" id="4.1.1.65"/>
    </reaction>
</comment>
<comment type="cofactor">
    <cofactor evidence="1">
        <name>pyruvate</name>
        <dbReference type="ChEBI" id="CHEBI:15361"/>
    </cofactor>
    <text evidence="1">Binds 1 pyruvoyl group covalently per subunit.</text>
</comment>
<comment type="pathway">
    <text evidence="1">Phospholipid metabolism; phosphatidylethanolamine biosynthesis; phosphatidylethanolamine from CDP-diacylglycerol: step 2/2.</text>
</comment>
<comment type="subunit">
    <text evidence="1">Heterodimer of a large membrane-associated beta subunit and a small pyruvoyl-containing alpha subunit.</text>
</comment>
<comment type="subcellular location">
    <subcellularLocation>
        <location evidence="1">Cell membrane</location>
        <topology evidence="1">Peripheral membrane protein</topology>
    </subcellularLocation>
</comment>
<comment type="PTM">
    <text evidence="1">Is synthesized initially as an inactive proenzyme. Formation of the active enzyme involves a self-maturation process in which the active site pyruvoyl group is generated from an internal serine residue via an autocatalytic post-translational modification. Two non-identical subunits are generated from the proenzyme in this reaction, and the pyruvate is formed at the N-terminus of the alpha chain, which is derived from the carboxyl end of the proenzyme. The post-translation cleavage follows an unusual pathway, termed non-hydrolytic serinolysis, in which the side chain hydroxyl group of the serine supplies its oxygen atom to form the C-terminus of the beta chain, while the remainder of the serine residue undergoes an oxidative deamination to produce ammonia and the pyruvoyl prosthetic group on the alpha chain.</text>
</comment>
<comment type="similarity">
    <text evidence="1">Belongs to the phosphatidylserine decarboxylase family. PSD-A subfamily.</text>
</comment>
<keyword id="KW-1003">Cell membrane</keyword>
<keyword id="KW-0210">Decarboxylase</keyword>
<keyword id="KW-0444">Lipid biosynthesis</keyword>
<keyword id="KW-0443">Lipid metabolism</keyword>
<keyword id="KW-0456">Lyase</keyword>
<keyword id="KW-0472">Membrane</keyword>
<keyword id="KW-0594">Phospholipid biosynthesis</keyword>
<keyword id="KW-1208">Phospholipid metabolism</keyword>
<keyword id="KW-0670">Pyruvate</keyword>
<keyword id="KW-1185">Reference proteome</keyword>
<keyword id="KW-0865">Zymogen</keyword>
<evidence type="ECO:0000255" key="1">
    <source>
        <dbReference type="HAMAP-Rule" id="MF_00664"/>
    </source>
</evidence>
<feature type="chain" id="PRO_1000131452" description="Phosphatidylserine decarboxylase beta chain" evidence="1">
    <location>
        <begin position="1"/>
        <end position="181"/>
    </location>
</feature>
<feature type="chain" id="PRO_1000131453" description="Phosphatidylserine decarboxylase alpha chain" evidence="1">
    <location>
        <begin position="182"/>
        <end position="212"/>
    </location>
</feature>
<feature type="active site" description="Schiff-base intermediate with substrate; via pyruvic acid" evidence="1">
    <location>
        <position position="182"/>
    </location>
</feature>
<feature type="site" description="Cleavage (non-hydrolytic); by autocatalysis" evidence="1">
    <location>
        <begin position="181"/>
        <end position="182"/>
    </location>
</feature>
<feature type="modified residue" description="Pyruvic acid (Ser); by autocatalysis" evidence="1">
    <location>
        <position position="182"/>
    </location>
</feature>
<accession>B2JDN8</accession>
<dbReference type="EC" id="4.1.1.65" evidence="1"/>
<dbReference type="EMBL" id="CP001043">
    <property type="protein sequence ID" value="ACC71198.1"/>
    <property type="molecule type" value="Genomic_DNA"/>
</dbReference>
<dbReference type="RefSeq" id="WP_012401406.1">
    <property type="nucleotide sequence ID" value="NC_010622.1"/>
</dbReference>
<dbReference type="SMR" id="B2JDN8"/>
<dbReference type="STRING" id="391038.Bphy_2019"/>
<dbReference type="KEGG" id="bph:Bphy_2019"/>
<dbReference type="eggNOG" id="COG0688">
    <property type="taxonomic scope" value="Bacteria"/>
</dbReference>
<dbReference type="HOGENOM" id="CLU_072492_0_0_4"/>
<dbReference type="OrthoDB" id="9790893at2"/>
<dbReference type="UniPathway" id="UPA00558">
    <property type="reaction ID" value="UER00616"/>
</dbReference>
<dbReference type="Proteomes" id="UP000001192">
    <property type="component" value="Chromosome 1"/>
</dbReference>
<dbReference type="GO" id="GO:0005886">
    <property type="term" value="C:plasma membrane"/>
    <property type="evidence" value="ECO:0007669"/>
    <property type="project" value="UniProtKB-SubCell"/>
</dbReference>
<dbReference type="GO" id="GO:0004609">
    <property type="term" value="F:phosphatidylserine decarboxylase activity"/>
    <property type="evidence" value="ECO:0007669"/>
    <property type="project" value="UniProtKB-UniRule"/>
</dbReference>
<dbReference type="GO" id="GO:0006646">
    <property type="term" value="P:phosphatidylethanolamine biosynthetic process"/>
    <property type="evidence" value="ECO:0007669"/>
    <property type="project" value="UniProtKB-UniRule"/>
</dbReference>
<dbReference type="HAMAP" id="MF_00664">
    <property type="entry name" value="PS_decarb_PSD_A"/>
    <property type="match status" value="1"/>
</dbReference>
<dbReference type="InterPro" id="IPR003817">
    <property type="entry name" value="PS_Dcarbxylase"/>
</dbReference>
<dbReference type="InterPro" id="IPR033175">
    <property type="entry name" value="PSD-A"/>
</dbReference>
<dbReference type="NCBIfam" id="TIGR00164">
    <property type="entry name" value="AS_decarb"/>
    <property type="match status" value="1"/>
</dbReference>
<dbReference type="NCBIfam" id="NF003678">
    <property type="entry name" value="PRK05305.1-2"/>
    <property type="match status" value="1"/>
</dbReference>
<dbReference type="NCBIfam" id="NF003680">
    <property type="entry name" value="PRK05305.1-5"/>
    <property type="match status" value="1"/>
</dbReference>
<dbReference type="NCBIfam" id="NF003685">
    <property type="entry name" value="PRK05305.2-5"/>
    <property type="match status" value="1"/>
</dbReference>
<dbReference type="PANTHER" id="PTHR35809">
    <property type="entry name" value="ARCHAETIDYLSERINE DECARBOXYLASE PROENZYME-RELATED"/>
    <property type="match status" value="1"/>
</dbReference>
<dbReference type="PANTHER" id="PTHR35809:SF1">
    <property type="entry name" value="ARCHAETIDYLSERINE DECARBOXYLASE PROENZYME-RELATED"/>
    <property type="match status" value="1"/>
</dbReference>
<dbReference type="Pfam" id="PF02666">
    <property type="entry name" value="PS_Dcarbxylase"/>
    <property type="match status" value="1"/>
</dbReference>
<name>PSD_PARP8</name>
<sequence length="212" mass="23169">MNYPHPIIAREGWPFIAIAAVVALLIHFVAGFGIAWIFWLLLIFVVQFFRDPARPIPTQANAVLCPADGRIVAVETAHDPYANREALKISVFMNVFNVHSQRSPVDGAISKVEYFPGAYLNAAVDKASTENERNAIVIETASGATVTSVQIAGLIARRILCYVRAGEPLTRGQRYGFIRFGSRVDVYLPVGSRPRVSIGEKVSASSTILAEL</sequence>
<gene>
    <name evidence="1" type="primary">psd</name>
    <name type="ordered locus">Bphy_2019</name>
</gene>
<protein>
    <recommendedName>
        <fullName evidence="1">Phosphatidylserine decarboxylase proenzyme</fullName>
        <ecNumber evidence="1">4.1.1.65</ecNumber>
    </recommendedName>
    <component>
        <recommendedName>
            <fullName evidence="1">Phosphatidylserine decarboxylase alpha chain</fullName>
        </recommendedName>
    </component>
    <component>
        <recommendedName>
            <fullName evidence="1">Phosphatidylserine decarboxylase beta chain</fullName>
        </recommendedName>
    </component>
</protein>
<reference key="1">
    <citation type="journal article" date="2014" name="Stand. Genomic Sci.">
        <title>Complete genome sequence of Burkholderia phymatum STM815(T), a broad host range and efficient nitrogen-fixing symbiont of Mimosa species.</title>
        <authorList>
            <person name="Moulin L."/>
            <person name="Klonowska A."/>
            <person name="Caroline B."/>
            <person name="Booth K."/>
            <person name="Vriezen J.A."/>
            <person name="Melkonian R."/>
            <person name="James E.K."/>
            <person name="Young J.P."/>
            <person name="Bena G."/>
            <person name="Hauser L."/>
            <person name="Land M."/>
            <person name="Kyrpides N."/>
            <person name="Bruce D."/>
            <person name="Chain P."/>
            <person name="Copeland A."/>
            <person name="Pitluck S."/>
            <person name="Woyke T."/>
            <person name="Lizotte-Waniewski M."/>
            <person name="Bristow J."/>
            <person name="Riley M."/>
        </authorList>
    </citation>
    <scope>NUCLEOTIDE SEQUENCE [LARGE SCALE GENOMIC DNA]</scope>
    <source>
        <strain>DSM 17167 / CIP 108236 / LMG 21445 / STM815</strain>
    </source>
</reference>
<proteinExistence type="inferred from homology"/>